<accession>B2UD46</accession>
<reference key="1">
    <citation type="submission" date="2008-05" db="EMBL/GenBank/DDBJ databases">
        <title>Complete sequence of chromosome 1 of Ralstonia pickettii 12J.</title>
        <authorList>
            <person name="Lucas S."/>
            <person name="Copeland A."/>
            <person name="Lapidus A."/>
            <person name="Glavina del Rio T."/>
            <person name="Dalin E."/>
            <person name="Tice H."/>
            <person name="Bruce D."/>
            <person name="Goodwin L."/>
            <person name="Pitluck S."/>
            <person name="Meincke L."/>
            <person name="Brettin T."/>
            <person name="Detter J.C."/>
            <person name="Han C."/>
            <person name="Kuske C.R."/>
            <person name="Schmutz J."/>
            <person name="Larimer F."/>
            <person name="Land M."/>
            <person name="Hauser L."/>
            <person name="Kyrpides N."/>
            <person name="Mikhailova N."/>
            <person name="Marsh T."/>
            <person name="Richardson P."/>
        </authorList>
    </citation>
    <scope>NUCLEOTIDE SEQUENCE [LARGE SCALE GENOMIC DNA]</scope>
    <source>
        <strain>12J</strain>
    </source>
</reference>
<proteinExistence type="inferred from homology"/>
<comment type="function">
    <text evidence="1">Catalyzes the ATP-dependent 2-thiolation of cytidine in position 32 of tRNA, to form 2-thiocytidine (s(2)C32). The sulfur atoms are provided by the cysteine/cysteine desulfurase (IscS) system.</text>
</comment>
<comment type="catalytic activity">
    <reaction evidence="1">
        <text>cytidine(32) in tRNA + S-sulfanyl-L-cysteinyl-[cysteine desulfurase] + AH2 + ATP = 2-thiocytidine(32) in tRNA + L-cysteinyl-[cysteine desulfurase] + A + AMP + diphosphate + H(+)</text>
        <dbReference type="Rhea" id="RHEA:57048"/>
        <dbReference type="Rhea" id="RHEA-COMP:10288"/>
        <dbReference type="Rhea" id="RHEA-COMP:12157"/>
        <dbReference type="Rhea" id="RHEA-COMP:12158"/>
        <dbReference type="Rhea" id="RHEA-COMP:14821"/>
        <dbReference type="ChEBI" id="CHEBI:13193"/>
        <dbReference type="ChEBI" id="CHEBI:15378"/>
        <dbReference type="ChEBI" id="CHEBI:17499"/>
        <dbReference type="ChEBI" id="CHEBI:29950"/>
        <dbReference type="ChEBI" id="CHEBI:30616"/>
        <dbReference type="ChEBI" id="CHEBI:33019"/>
        <dbReference type="ChEBI" id="CHEBI:61963"/>
        <dbReference type="ChEBI" id="CHEBI:82748"/>
        <dbReference type="ChEBI" id="CHEBI:141453"/>
        <dbReference type="ChEBI" id="CHEBI:456215"/>
    </reaction>
    <physiologicalReaction direction="left-to-right" evidence="1">
        <dbReference type="Rhea" id="RHEA:57049"/>
    </physiologicalReaction>
</comment>
<comment type="cofactor">
    <cofactor evidence="1">
        <name>Mg(2+)</name>
        <dbReference type="ChEBI" id="CHEBI:18420"/>
    </cofactor>
</comment>
<comment type="cofactor">
    <cofactor evidence="1">
        <name>[4Fe-4S] cluster</name>
        <dbReference type="ChEBI" id="CHEBI:49883"/>
    </cofactor>
    <text evidence="1">Binds 1 [4Fe-4S] cluster per subunit. The cluster is chelated by three Cys residues, the fourth Fe has a free coordination site that may bind a sulfur atom transferred from the persulfide of IscS.</text>
</comment>
<comment type="pathway">
    <text evidence="1">tRNA modification.</text>
</comment>
<comment type="subunit">
    <text evidence="1">Homodimer.</text>
</comment>
<comment type="subcellular location">
    <subcellularLocation>
        <location evidence="1">Cytoplasm</location>
    </subcellularLocation>
</comment>
<comment type="miscellaneous">
    <text evidence="1">The thiolation reaction likely consists of two steps: a first activation step by ATP to form an adenylated intermediate of the target base of tRNA, and a second nucleophilic substitution step of the sulfur (S) atom supplied by the hydrosulfide attached to the Fe-S cluster.</text>
</comment>
<comment type="similarity">
    <text evidence="1">Belongs to the TtcA family.</text>
</comment>
<organism>
    <name type="scientific">Ralstonia pickettii (strain 12J)</name>
    <dbReference type="NCBI Taxonomy" id="402626"/>
    <lineage>
        <taxon>Bacteria</taxon>
        <taxon>Pseudomonadati</taxon>
        <taxon>Pseudomonadota</taxon>
        <taxon>Betaproteobacteria</taxon>
        <taxon>Burkholderiales</taxon>
        <taxon>Burkholderiaceae</taxon>
        <taxon>Ralstonia</taxon>
    </lineage>
</organism>
<protein>
    <recommendedName>
        <fullName evidence="1">tRNA-cytidine(32) 2-sulfurtransferase</fullName>
        <ecNumber evidence="1">2.8.1.-</ecNumber>
    </recommendedName>
    <alternativeName>
        <fullName evidence="1">Two-thiocytidine biosynthesis protein A</fullName>
    </alternativeName>
    <alternativeName>
        <fullName evidence="1">tRNA 2-thiocytidine biosynthesis protein TtcA</fullName>
    </alternativeName>
</protein>
<sequence>MTFSNNFHRLETRLQSQVGRAIGDFNMIEDGDTILVCLSGGKDSYTMLSVLMALQKRAPVDFKLIAMNLDQKQPGFPEEVLPNYLKKLGVEYVIVEADTYSIVKEKVPEGKTTCSLCSRLRRGVIYRTAKELGANKIALGHHRDDIVNTFFLNMFFGGKMKSMPPKLATDNGDHIVIRPLAYCAEKDIASYARAMEFPIIPCNLCGSQENLQRKKVKEMLLEWERQTPGRIDNIFASLRNVVPSHLADTDLFDFNGLTTGLAKIGEDALFGQTAYDQAPLVFAGSHDDRIEFVRFERKPGDKSAEQAVPGEAAAN</sequence>
<feature type="chain" id="PRO_1000188650" description="tRNA-cytidine(32) 2-sulfurtransferase">
    <location>
        <begin position="1"/>
        <end position="315"/>
    </location>
</feature>
<feature type="short sequence motif" description="PP-loop motif" evidence="1">
    <location>
        <begin position="39"/>
        <end position="44"/>
    </location>
</feature>
<feature type="binding site" evidence="1">
    <location>
        <position position="114"/>
    </location>
    <ligand>
        <name>[4Fe-4S] cluster</name>
        <dbReference type="ChEBI" id="CHEBI:49883"/>
    </ligand>
</feature>
<feature type="binding site" evidence="1">
    <location>
        <position position="117"/>
    </location>
    <ligand>
        <name>[4Fe-4S] cluster</name>
        <dbReference type="ChEBI" id="CHEBI:49883"/>
    </ligand>
</feature>
<feature type="binding site" evidence="1">
    <location>
        <position position="205"/>
    </location>
    <ligand>
        <name>[4Fe-4S] cluster</name>
        <dbReference type="ChEBI" id="CHEBI:49883"/>
    </ligand>
</feature>
<gene>
    <name evidence="1" type="primary">ttcA</name>
    <name type="ordered locus">Rpic_0060</name>
</gene>
<name>TTCA_RALPJ</name>
<evidence type="ECO:0000255" key="1">
    <source>
        <dbReference type="HAMAP-Rule" id="MF_01850"/>
    </source>
</evidence>
<keyword id="KW-0004">4Fe-4S</keyword>
<keyword id="KW-0067">ATP-binding</keyword>
<keyword id="KW-0963">Cytoplasm</keyword>
<keyword id="KW-0408">Iron</keyword>
<keyword id="KW-0411">Iron-sulfur</keyword>
<keyword id="KW-0460">Magnesium</keyword>
<keyword id="KW-0479">Metal-binding</keyword>
<keyword id="KW-0547">Nucleotide-binding</keyword>
<keyword id="KW-0694">RNA-binding</keyword>
<keyword id="KW-0808">Transferase</keyword>
<keyword id="KW-0819">tRNA processing</keyword>
<keyword id="KW-0820">tRNA-binding</keyword>
<dbReference type="EC" id="2.8.1.-" evidence="1"/>
<dbReference type="EMBL" id="CP001068">
    <property type="protein sequence ID" value="ACD25225.1"/>
    <property type="molecule type" value="Genomic_DNA"/>
</dbReference>
<dbReference type="SMR" id="B2UD46"/>
<dbReference type="STRING" id="402626.Rpic_0060"/>
<dbReference type="KEGG" id="rpi:Rpic_0060"/>
<dbReference type="eggNOG" id="COG0037">
    <property type="taxonomic scope" value="Bacteria"/>
</dbReference>
<dbReference type="HOGENOM" id="CLU_026481_0_0_4"/>
<dbReference type="GO" id="GO:0005737">
    <property type="term" value="C:cytoplasm"/>
    <property type="evidence" value="ECO:0007669"/>
    <property type="project" value="UniProtKB-SubCell"/>
</dbReference>
<dbReference type="GO" id="GO:0051539">
    <property type="term" value="F:4 iron, 4 sulfur cluster binding"/>
    <property type="evidence" value="ECO:0007669"/>
    <property type="project" value="UniProtKB-UniRule"/>
</dbReference>
<dbReference type="GO" id="GO:0005524">
    <property type="term" value="F:ATP binding"/>
    <property type="evidence" value="ECO:0007669"/>
    <property type="project" value="UniProtKB-UniRule"/>
</dbReference>
<dbReference type="GO" id="GO:0000287">
    <property type="term" value="F:magnesium ion binding"/>
    <property type="evidence" value="ECO:0007669"/>
    <property type="project" value="UniProtKB-UniRule"/>
</dbReference>
<dbReference type="GO" id="GO:0016783">
    <property type="term" value="F:sulfurtransferase activity"/>
    <property type="evidence" value="ECO:0007669"/>
    <property type="project" value="UniProtKB-UniRule"/>
</dbReference>
<dbReference type="GO" id="GO:0000049">
    <property type="term" value="F:tRNA binding"/>
    <property type="evidence" value="ECO:0007669"/>
    <property type="project" value="UniProtKB-KW"/>
</dbReference>
<dbReference type="GO" id="GO:0034227">
    <property type="term" value="P:tRNA thio-modification"/>
    <property type="evidence" value="ECO:0007669"/>
    <property type="project" value="UniProtKB-UniRule"/>
</dbReference>
<dbReference type="CDD" id="cd24138">
    <property type="entry name" value="TtcA-like"/>
    <property type="match status" value="1"/>
</dbReference>
<dbReference type="Gene3D" id="3.40.50.620">
    <property type="entry name" value="HUPs"/>
    <property type="match status" value="1"/>
</dbReference>
<dbReference type="HAMAP" id="MF_01850">
    <property type="entry name" value="TtcA"/>
    <property type="match status" value="1"/>
</dbReference>
<dbReference type="InterPro" id="IPR014729">
    <property type="entry name" value="Rossmann-like_a/b/a_fold"/>
</dbReference>
<dbReference type="InterPro" id="IPR011063">
    <property type="entry name" value="TilS/TtcA_N"/>
</dbReference>
<dbReference type="InterPro" id="IPR012089">
    <property type="entry name" value="tRNA_Cyd_32_2_STrfase"/>
</dbReference>
<dbReference type="NCBIfam" id="NF007972">
    <property type="entry name" value="PRK10696.1"/>
    <property type="match status" value="1"/>
</dbReference>
<dbReference type="PANTHER" id="PTHR43686:SF1">
    <property type="entry name" value="AMINOTRAN_5 DOMAIN-CONTAINING PROTEIN"/>
    <property type="match status" value="1"/>
</dbReference>
<dbReference type="PANTHER" id="PTHR43686">
    <property type="entry name" value="SULFURTRANSFERASE-RELATED"/>
    <property type="match status" value="1"/>
</dbReference>
<dbReference type="Pfam" id="PF01171">
    <property type="entry name" value="ATP_bind_3"/>
    <property type="match status" value="1"/>
</dbReference>
<dbReference type="SUPFAM" id="SSF52402">
    <property type="entry name" value="Adenine nucleotide alpha hydrolases-like"/>
    <property type="match status" value="1"/>
</dbReference>